<comment type="function">
    <text evidence="1">Component of the multi-pass translocon (MPT) complex that mediates insertion of multi-pass membrane proteins into the lipid bilayer of membranes. The MPT complex takes over after the SEC61 complex: following membrane insertion of the first few transmembrane segments of proteins by the SEC61 complex, the MPT complex occludes the lateral gate of the SEC61 complex to promote insertion of subsequent transmembrane regions.</text>
</comment>
<comment type="subunit">
    <text evidence="1">Component of the back of Sec61 (BOS) complex, composed of NCLN/Nicalin, NOMO (NOMO1, NOMO2 or NOMO3) and TMEM147. The BOS complex is part of the multi-pass translocon (MPT) complex, composed of three subcomplexes, the GEL complex (composed of RAB5IF/OPTI and TMCO1), the BOS complex (composed of NCLN/Nicalin, NOMO and TMEM147) and the PAT complex (composed of WDR83OS/Asterix and CCDC47). The MPT complex associates with the SEC61 complex.</text>
</comment>
<comment type="subcellular location">
    <subcellularLocation>
        <location evidence="1">Endoplasmic reticulum membrane</location>
        <topology evidence="1">Single-pass type I membrane protein</topology>
    </subcellularLocation>
</comment>
<comment type="sequence caution" evidence="4">
    <conflict type="erroneous initiation">
        <sequence resource="EMBL-CDS" id="AAH24503"/>
    </conflict>
    <text>Truncated N-terminus.</text>
</comment>
<comment type="sequence caution" evidence="4">
    <conflict type="erroneous initiation">
        <sequence resource="EMBL-CDS" id="AAH33923"/>
    </conflict>
    <text>Truncated N-terminus.</text>
</comment>
<comment type="sequence caution" evidence="4">
    <conflict type="erroneous initiation">
        <sequence resource="EMBL-CDS" id="BAC38713"/>
    </conflict>
    <text>Truncated N-terminus.</text>
</comment>
<reference evidence="8" key="1">
    <citation type="journal article" date="2005" name="Science">
        <title>The transcriptional landscape of the mammalian genome.</title>
        <authorList>
            <person name="Carninci P."/>
            <person name="Kasukawa T."/>
            <person name="Katayama S."/>
            <person name="Gough J."/>
            <person name="Frith M.C."/>
            <person name="Maeda N."/>
            <person name="Oyama R."/>
            <person name="Ravasi T."/>
            <person name="Lenhard B."/>
            <person name="Wells C."/>
            <person name="Kodzius R."/>
            <person name="Shimokawa K."/>
            <person name="Bajic V.B."/>
            <person name="Brenner S.E."/>
            <person name="Batalov S."/>
            <person name="Forrest A.R."/>
            <person name="Zavolan M."/>
            <person name="Davis M.J."/>
            <person name="Wilming L.G."/>
            <person name="Aidinis V."/>
            <person name="Allen J.E."/>
            <person name="Ambesi-Impiombato A."/>
            <person name="Apweiler R."/>
            <person name="Aturaliya R.N."/>
            <person name="Bailey T.L."/>
            <person name="Bansal M."/>
            <person name="Baxter L."/>
            <person name="Beisel K.W."/>
            <person name="Bersano T."/>
            <person name="Bono H."/>
            <person name="Chalk A.M."/>
            <person name="Chiu K.P."/>
            <person name="Choudhary V."/>
            <person name="Christoffels A."/>
            <person name="Clutterbuck D.R."/>
            <person name="Crowe M.L."/>
            <person name="Dalla E."/>
            <person name="Dalrymple B.P."/>
            <person name="de Bono B."/>
            <person name="Della Gatta G."/>
            <person name="di Bernardo D."/>
            <person name="Down T."/>
            <person name="Engstrom P."/>
            <person name="Fagiolini M."/>
            <person name="Faulkner G."/>
            <person name="Fletcher C.F."/>
            <person name="Fukushima T."/>
            <person name="Furuno M."/>
            <person name="Futaki S."/>
            <person name="Gariboldi M."/>
            <person name="Georgii-Hemming P."/>
            <person name="Gingeras T.R."/>
            <person name="Gojobori T."/>
            <person name="Green R.E."/>
            <person name="Gustincich S."/>
            <person name="Harbers M."/>
            <person name="Hayashi Y."/>
            <person name="Hensch T.K."/>
            <person name="Hirokawa N."/>
            <person name="Hill D."/>
            <person name="Huminiecki L."/>
            <person name="Iacono M."/>
            <person name="Ikeo K."/>
            <person name="Iwama A."/>
            <person name="Ishikawa T."/>
            <person name="Jakt M."/>
            <person name="Kanapin A."/>
            <person name="Katoh M."/>
            <person name="Kawasawa Y."/>
            <person name="Kelso J."/>
            <person name="Kitamura H."/>
            <person name="Kitano H."/>
            <person name="Kollias G."/>
            <person name="Krishnan S.P."/>
            <person name="Kruger A."/>
            <person name="Kummerfeld S.K."/>
            <person name="Kurochkin I.V."/>
            <person name="Lareau L.F."/>
            <person name="Lazarevic D."/>
            <person name="Lipovich L."/>
            <person name="Liu J."/>
            <person name="Liuni S."/>
            <person name="McWilliam S."/>
            <person name="Madan Babu M."/>
            <person name="Madera M."/>
            <person name="Marchionni L."/>
            <person name="Matsuda H."/>
            <person name="Matsuzawa S."/>
            <person name="Miki H."/>
            <person name="Mignone F."/>
            <person name="Miyake S."/>
            <person name="Morris K."/>
            <person name="Mottagui-Tabar S."/>
            <person name="Mulder N."/>
            <person name="Nakano N."/>
            <person name="Nakauchi H."/>
            <person name="Ng P."/>
            <person name="Nilsson R."/>
            <person name="Nishiguchi S."/>
            <person name="Nishikawa S."/>
            <person name="Nori F."/>
            <person name="Ohara O."/>
            <person name="Okazaki Y."/>
            <person name="Orlando V."/>
            <person name="Pang K.C."/>
            <person name="Pavan W.J."/>
            <person name="Pavesi G."/>
            <person name="Pesole G."/>
            <person name="Petrovsky N."/>
            <person name="Piazza S."/>
            <person name="Reed J."/>
            <person name="Reid J.F."/>
            <person name="Ring B.Z."/>
            <person name="Ringwald M."/>
            <person name="Rost B."/>
            <person name="Ruan Y."/>
            <person name="Salzberg S.L."/>
            <person name="Sandelin A."/>
            <person name="Schneider C."/>
            <person name="Schoenbach C."/>
            <person name="Sekiguchi K."/>
            <person name="Semple C.A."/>
            <person name="Seno S."/>
            <person name="Sessa L."/>
            <person name="Sheng Y."/>
            <person name="Shibata Y."/>
            <person name="Shimada H."/>
            <person name="Shimada K."/>
            <person name="Silva D."/>
            <person name="Sinclair B."/>
            <person name="Sperling S."/>
            <person name="Stupka E."/>
            <person name="Sugiura K."/>
            <person name="Sultana R."/>
            <person name="Takenaka Y."/>
            <person name="Taki K."/>
            <person name="Tammoja K."/>
            <person name="Tan S.L."/>
            <person name="Tang S."/>
            <person name="Taylor M.S."/>
            <person name="Tegner J."/>
            <person name="Teichmann S.A."/>
            <person name="Ueda H.R."/>
            <person name="van Nimwegen E."/>
            <person name="Verardo R."/>
            <person name="Wei C.L."/>
            <person name="Yagi K."/>
            <person name="Yamanishi H."/>
            <person name="Zabarovsky E."/>
            <person name="Zhu S."/>
            <person name="Zimmer A."/>
            <person name="Hide W."/>
            <person name="Bult C."/>
            <person name="Grimmond S.M."/>
            <person name="Teasdale R.D."/>
            <person name="Liu E.T."/>
            <person name="Brusic V."/>
            <person name="Quackenbush J."/>
            <person name="Wahlestedt C."/>
            <person name="Mattick J.S."/>
            <person name="Hume D.A."/>
            <person name="Kai C."/>
            <person name="Sasaki D."/>
            <person name="Tomaru Y."/>
            <person name="Fukuda S."/>
            <person name="Kanamori-Katayama M."/>
            <person name="Suzuki M."/>
            <person name="Aoki J."/>
            <person name="Arakawa T."/>
            <person name="Iida J."/>
            <person name="Imamura K."/>
            <person name="Itoh M."/>
            <person name="Kato T."/>
            <person name="Kawaji H."/>
            <person name="Kawagashira N."/>
            <person name="Kawashima T."/>
            <person name="Kojima M."/>
            <person name="Kondo S."/>
            <person name="Konno H."/>
            <person name="Nakano K."/>
            <person name="Ninomiya N."/>
            <person name="Nishio T."/>
            <person name="Okada M."/>
            <person name="Plessy C."/>
            <person name="Shibata K."/>
            <person name="Shiraki T."/>
            <person name="Suzuki S."/>
            <person name="Tagami M."/>
            <person name="Waki K."/>
            <person name="Watahiki A."/>
            <person name="Okamura-Oho Y."/>
            <person name="Suzuki H."/>
            <person name="Kawai J."/>
            <person name="Hayashizaki Y."/>
        </authorList>
    </citation>
    <scope>NUCLEOTIDE SEQUENCE [LARGE SCALE MRNA]</scope>
    <source>
        <strain evidence="8">C57BL/6J</strain>
        <tissue evidence="10">Blastocyst</tissue>
        <tissue evidence="8">Cerebellum</tissue>
        <tissue evidence="9">Embryonic spinal cord</tissue>
    </source>
</reference>
<reference evidence="7" key="2">
    <citation type="journal article" date="2004" name="Genome Res.">
        <title>The status, quality, and expansion of the NIH full-length cDNA project: the Mammalian Gene Collection (MGC).</title>
        <authorList>
            <consortium name="The MGC Project Team"/>
        </authorList>
    </citation>
    <scope>NUCLEOTIDE SEQUENCE [LARGE SCALE MRNA]</scope>
    <source>
        <strain evidence="7">C57BL/6J</strain>
        <strain evidence="6">FVB/N</strain>
        <tissue evidence="7">Brain</tissue>
        <tissue evidence="5">Colon</tissue>
        <tissue evidence="6">Liver</tissue>
    </source>
</reference>
<reference key="3">
    <citation type="journal article" date="2007" name="Proc. Natl. Acad. Sci. U.S.A.">
        <title>Large-scale phosphorylation analysis of mouse liver.</title>
        <authorList>
            <person name="Villen J."/>
            <person name="Beausoleil S.A."/>
            <person name="Gerber S.A."/>
            <person name="Gygi S.P."/>
        </authorList>
    </citation>
    <scope>PHOSPHORYLATION [LARGE SCALE ANALYSIS] AT SER-1196 AND SER-1197</scope>
    <scope>IDENTIFICATION BY MASS SPECTROMETRY [LARGE SCALE ANALYSIS]</scope>
    <source>
        <tissue>Liver</tissue>
    </source>
</reference>
<reference key="4">
    <citation type="journal article" date="2010" name="Cell">
        <title>A tissue-specific atlas of mouse protein phosphorylation and expression.</title>
        <authorList>
            <person name="Huttlin E.L."/>
            <person name="Jedrychowski M.P."/>
            <person name="Elias J.E."/>
            <person name="Goswami T."/>
            <person name="Rad R."/>
            <person name="Beausoleil S.A."/>
            <person name="Villen J."/>
            <person name="Haas W."/>
            <person name="Sowa M.E."/>
            <person name="Gygi S.P."/>
        </authorList>
    </citation>
    <scope>IDENTIFICATION BY MASS SPECTROMETRY [LARGE SCALE ANALYSIS]</scope>
    <source>
        <tissue>Brain</tissue>
        <tissue>Brown adipose tissue</tissue>
        <tissue>Heart</tissue>
        <tissue>Kidney</tissue>
        <tissue>Liver</tissue>
        <tissue>Lung</tissue>
        <tissue>Pancreas</tissue>
        <tissue>Spleen</tissue>
        <tissue>Testis</tissue>
    </source>
</reference>
<organism>
    <name type="scientific">Mus musculus</name>
    <name type="common">Mouse</name>
    <dbReference type="NCBI Taxonomy" id="10090"/>
    <lineage>
        <taxon>Eukaryota</taxon>
        <taxon>Metazoa</taxon>
        <taxon>Chordata</taxon>
        <taxon>Craniata</taxon>
        <taxon>Vertebrata</taxon>
        <taxon>Euteleostomi</taxon>
        <taxon>Mammalia</taxon>
        <taxon>Eutheria</taxon>
        <taxon>Euarchontoglires</taxon>
        <taxon>Glires</taxon>
        <taxon>Rodentia</taxon>
        <taxon>Myomorpha</taxon>
        <taxon>Muroidea</taxon>
        <taxon>Muridae</taxon>
        <taxon>Murinae</taxon>
        <taxon>Mus</taxon>
        <taxon>Mus</taxon>
    </lineage>
</organism>
<evidence type="ECO:0000250" key="1">
    <source>
        <dbReference type="UniProtKB" id="Q15155"/>
    </source>
</evidence>
<evidence type="ECO:0000255" key="2"/>
<evidence type="ECO:0000256" key="3">
    <source>
        <dbReference type="SAM" id="MobiDB-lite"/>
    </source>
</evidence>
<evidence type="ECO:0000305" key="4"/>
<evidence type="ECO:0000312" key="5">
    <source>
        <dbReference type="EMBL" id="AAH24503.1"/>
    </source>
</evidence>
<evidence type="ECO:0000312" key="6">
    <source>
        <dbReference type="EMBL" id="AAH33923.1"/>
    </source>
</evidence>
<evidence type="ECO:0000312" key="7">
    <source>
        <dbReference type="EMBL" id="AAH72630.1"/>
    </source>
</evidence>
<evidence type="ECO:0000312" key="8">
    <source>
        <dbReference type="EMBL" id="BAC38508.1"/>
    </source>
</evidence>
<evidence type="ECO:0000312" key="9">
    <source>
        <dbReference type="EMBL" id="BAC38713.1"/>
    </source>
</evidence>
<evidence type="ECO:0000312" key="10">
    <source>
        <dbReference type="EMBL" id="BAE39002.1"/>
    </source>
</evidence>
<evidence type="ECO:0000312" key="11">
    <source>
        <dbReference type="MGI" id="MGI:2385850"/>
    </source>
</evidence>
<evidence type="ECO:0007744" key="12">
    <source>
    </source>
</evidence>
<dbReference type="EMBL" id="AK043279">
    <property type="protein sequence ID" value="BAC31513.1"/>
    <property type="molecule type" value="mRNA"/>
</dbReference>
<dbReference type="EMBL" id="AK082495">
    <property type="protein sequence ID" value="BAC38508.1"/>
    <property type="molecule type" value="mRNA"/>
</dbReference>
<dbReference type="EMBL" id="AK082963">
    <property type="protein sequence ID" value="BAC38713.1"/>
    <property type="status" value="ALT_INIT"/>
    <property type="molecule type" value="mRNA"/>
</dbReference>
<dbReference type="EMBL" id="AK166764">
    <property type="protein sequence ID" value="BAE39002.1"/>
    <property type="molecule type" value="mRNA"/>
</dbReference>
<dbReference type="EMBL" id="BC024503">
    <property type="protein sequence ID" value="AAH24503.1"/>
    <property type="status" value="ALT_INIT"/>
    <property type="molecule type" value="mRNA"/>
</dbReference>
<dbReference type="EMBL" id="BC033923">
    <property type="protein sequence ID" value="AAH33923.1"/>
    <property type="status" value="ALT_INIT"/>
    <property type="molecule type" value="mRNA"/>
</dbReference>
<dbReference type="EMBL" id="BC072630">
    <property type="protein sequence ID" value="AAH72630.1"/>
    <property type="molecule type" value="mRNA"/>
</dbReference>
<dbReference type="CCDS" id="CCDS21273.1"/>
<dbReference type="RefSeq" id="NP_694697.3">
    <property type="nucleotide sequence ID" value="NM_153057.4"/>
</dbReference>
<dbReference type="SMR" id="Q6GQT9"/>
<dbReference type="BioGRID" id="229243">
    <property type="interactions" value="10"/>
</dbReference>
<dbReference type="FunCoup" id="Q6GQT9">
    <property type="interactions" value="611"/>
</dbReference>
<dbReference type="STRING" id="10090.ENSMUSP00000033121"/>
<dbReference type="GlyConnect" id="2564">
    <property type="glycosylation" value="4 N-Linked glycans (3 sites)"/>
</dbReference>
<dbReference type="GlyCosmos" id="Q6GQT9">
    <property type="glycosylation" value="4 sites, 4 glycans"/>
</dbReference>
<dbReference type="GlyGen" id="Q6GQT9">
    <property type="glycosylation" value="7 sites, 8 N-linked glycans (5 sites), 1 O-linked glycan (1 site)"/>
</dbReference>
<dbReference type="iPTMnet" id="Q6GQT9"/>
<dbReference type="PhosphoSitePlus" id="Q6GQT9"/>
<dbReference type="SwissPalm" id="Q6GQT9"/>
<dbReference type="jPOST" id="Q6GQT9"/>
<dbReference type="PaxDb" id="10090-ENSMUSP00000033121"/>
<dbReference type="PeptideAtlas" id="Q6GQT9"/>
<dbReference type="ProteomicsDB" id="293701"/>
<dbReference type="Pumba" id="Q6GQT9"/>
<dbReference type="DNASU" id="211548"/>
<dbReference type="Ensembl" id="ENSMUST00000033121.7">
    <property type="protein sequence ID" value="ENSMUSP00000033121.6"/>
    <property type="gene ID" value="ENSMUSG00000030835.7"/>
</dbReference>
<dbReference type="GeneID" id="211548"/>
<dbReference type="KEGG" id="mmu:211548"/>
<dbReference type="UCSC" id="uc009gyb.2">
    <property type="organism name" value="mouse"/>
</dbReference>
<dbReference type="AGR" id="MGI:2385850"/>
<dbReference type="CTD" id="23420"/>
<dbReference type="MGI" id="MGI:2385850">
    <property type="gene designation" value="Nomo1"/>
</dbReference>
<dbReference type="VEuPathDB" id="HostDB:ENSMUSG00000030835"/>
<dbReference type="eggNOG" id="KOG1948">
    <property type="taxonomic scope" value="Eukaryota"/>
</dbReference>
<dbReference type="GeneTree" id="ENSGT00390000000089"/>
<dbReference type="HOGENOM" id="CLU_007543_2_0_1"/>
<dbReference type="InParanoid" id="Q6GQT9"/>
<dbReference type="OMA" id="FVFKGFG"/>
<dbReference type="OrthoDB" id="10263633at2759"/>
<dbReference type="PhylomeDB" id="Q6GQT9"/>
<dbReference type="TreeFam" id="TF313696"/>
<dbReference type="BioGRID-ORCS" id="211548">
    <property type="hits" value="4 hits in 77 CRISPR screens"/>
</dbReference>
<dbReference type="CD-CODE" id="CE726F99">
    <property type="entry name" value="Postsynaptic density"/>
</dbReference>
<dbReference type="ChiTaRS" id="Nomo1">
    <property type="organism name" value="mouse"/>
</dbReference>
<dbReference type="PRO" id="PR:Q6GQT9"/>
<dbReference type="Proteomes" id="UP000000589">
    <property type="component" value="Chromosome 7"/>
</dbReference>
<dbReference type="RNAct" id="Q6GQT9">
    <property type="molecule type" value="protein"/>
</dbReference>
<dbReference type="Bgee" id="ENSMUSG00000030835">
    <property type="expression patterns" value="Expressed in otic placode and 266 other cell types or tissues"/>
</dbReference>
<dbReference type="GO" id="GO:0005789">
    <property type="term" value="C:endoplasmic reticulum membrane"/>
    <property type="evidence" value="ECO:0007669"/>
    <property type="project" value="UniProtKB-SubCell"/>
</dbReference>
<dbReference type="GO" id="GO:0160064">
    <property type="term" value="C:multi-pass translocon complex"/>
    <property type="evidence" value="ECO:0000250"/>
    <property type="project" value="UniProtKB"/>
</dbReference>
<dbReference type="GO" id="GO:0030246">
    <property type="term" value="F:carbohydrate binding"/>
    <property type="evidence" value="ECO:0007669"/>
    <property type="project" value="InterPro"/>
</dbReference>
<dbReference type="GO" id="GO:0043022">
    <property type="term" value="F:ribosome binding"/>
    <property type="evidence" value="ECO:0000250"/>
    <property type="project" value="UniProtKB"/>
</dbReference>
<dbReference type="GO" id="GO:0160063">
    <property type="term" value="P:multi-pass transmembrane protein insertion into ER membrane"/>
    <property type="evidence" value="ECO:0000250"/>
    <property type="project" value="UniProtKB"/>
</dbReference>
<dbReference type="FunFam" id="2.60.40.1120:FF:000001">
    <property type="entry name" value="Nodal modulator 1"/>
    <property type="match status" value="1"/>
</dbReference>
<dbReference type="Gene3D" id="2.60.40.1120">
    <property type="entry name" value="Carboxypeptidase-like, regulatory domain"/>
    <property type="match status" value="1"/>
</dbReference>
<dbReference type="InterPro" id="IPR013784">
    <property type="entry name" value="Carb-bd-like_fold"/>
</dbReference>
<dbReference type="InterPro" id="IPR008969">
    <property type="entry name" value="CarboxyPept-like_regulatory"/>
</dbReference>
<dbReference type="InterPro" id="IPR055075">
    <property type="entry name" value="NOMO-like_N"/>
</dbReference>
<dbReference type="InterPro" id="IPR055074">
    <property type="entry name" value="NOMO1-3_2nd"/>
</dbReference>
<dbReference type="InterPro" id="IPR055073">
    <property type="entry name" value="NOMO1-like_9th"/>
</dbReference>
<dbReference type="InterPro" id="IPR056191">
    <property type="entry name" value="NOMO_12th"/>
</dbReference>
<dbReference type="InterPro" id="IPR056189">
    <property type="entry name" value="NOMO_3rd"/>
</dbReference>
<dbReference type="InterPro" id="IPR056190">
    <property type="entry name" value="NOMO_5th"/>
</dbReference>
<dbReference type="InterPro" id="IPR056188">
    <property type="entry name" value="NOMO_6th"/>
</dbReference>
<dbReference type="InterPro" id="IPR056319">
    <property type="entry name" value="NOMO_7th"/>
</dbReference>
<dbReference type="InterPro" id="IPR056187">
    <property type="entry name" value="NOMO_8th"/>
</dbReference>
<dbReference type="InterPro" id="IPR051417">
    <property type="entry name" value="SDr/BOS_complex"/>
</dbReference>
<dbReference type="PANTHER" id="PTHR23303:SF14">
    <property type="entry name" value="BOS COMPLEX SUBUNIT NOMO1-RELATED"/>
    <property type="match status" value="1"/>
</dbReference>
<dbReference type="PANTHER" id="PTHR23303">
    <property type="entry name" value="CARBOXYPEPTIDASE REGULATORY REGION-CONTAINING"/>
    <property type="match status" value="1"/>
</dbReference>
<dbReference type="Pfam" id="PF13620">
    <property type="entry name" value="CarboxypepD_reg"/>
    <property type="match status" value="1"/>
</dbReference>
<dbReference type="Pfam" id="PF23141">
    <property type="entry name" value="Ig_NOMO"/>
    <property type="match status" value="1"/>
</dbReference>
<dbReference type="Pfam" id="PF22898">
    <property type="entry name" value="NOMO1-like_1st"/>
    <property type="match status" value="1"/>
</dbReference>
<dbReference type="Pfam" id="PF22904">
    <property type="entry name" value="NOMO1-like_2nd"/>
    <property type="match status" value="1"/>
</dbReference>
<dbReference type="Pfam" id="PF22902">
    <property type="entry name" value="NOMO1-like_9th"/>
    <property type="match status" value="1"/>
</dbReference>
<dbReference type="Pfam" id="PF23192">
    <property type="entry name" value="NOMO_12th"/>
    <property type="match status" value="1"/>
</dbReference>
<dbReference type="Pfam" id="PF23193">
    <property type="entry name" value="NOMO_3rd"/>
    <property type="match status" value="1"/>
</dbReference>
<dbReference type="Pfam" id="PF23194">
    <property type="entry name" value="NOMO_5th"/>
    <property type="match status" value="1"/>
</dbReference>
<dbReference type="Pfam" id="PF23196">
    <property type="entry name" value="NOMO_6th"/>
    <property type="match status" value="1"/>
</dbReference>
<dbReference type="Pfam" id="PF23660">
    <property type="entry name" value="NOMO_8th"/>
    <property type="match status" value="1"/>
</dbReference>
<dbReference type="SUPFAM" id="SSF49464">
    <property type="entry name" value="Carboxypeptidase regulatory domain-like"/>
    <property type="match status" value="1"/>
</dbReference>
<dbReference type="SUPFAM" id="SSF49452">
    <property type="entry name" value="Starch-binding domain-like"/>
    <property type="match status" value="3"/>
</dbReference>
<feature type="signal peptide" evidence="2">
    <location>
        <begin position="1"/>
        <end position="23"/>
    </location>
</feature>
<feature type="chain" id="PRO_0000396822" description="BOS complex subunit NOMO1" evidence="2">
    <location>
        <begin position="24"/>
        <end position="1214"/>
    </location>
</feature>
<feature type="topological domain" description="Extracellular" evidence="2">
    <location>
        <begin position="24"/>
        <end position="1150"/>
    </location>
</feature>
<feature type="transmembrane region" description="Helical" evidence="2">
    <location>
        <begin position="1151"/>
        <end position="1167"/>
    </location>
</feature>
<feature type="topological domain" description="Cytoplasmic" evidence="2">
    <location>
        <begin position="1168"/>
        <end position="1214"/>
    </location>
</feature>
<feature type="region of interest" description="Disordered" evidence="3">
    <location>
        <begin position="708"/>
        <end position="733"/>
    </location>
</feature>
<feature type="region of interest" description="Disordered" evidence="3">
    <location>
        <begin position="1190"/>
        <end position="1214"/>
    </location>
</feature>
<feature type="coiled-coil region" evidence="2">
    <location>
        <begin position="692"/>
        <end position="720"/>
    </location>
</feature>
<feature type="compositionally biased region" description="Basic and acidic residues" evidence="3">
    <location>
        <begin position="708"/>
        <end position="726"/>
    </location>
</feature>
<feature type="compositionally biased region" description="Basic residues" evidence="3">
    <location>
        <begin position="1205"/>
        <end position="1214"/>
    </location>
</feature>
<feature type="modified residue" description="Phosphoserine" evidence="12">
    <location>
        <position position="1196"/>
    </location>
</feature>
<feature type="modified residue" description="Phosphoserine" evidence="12">
    <location>
        <position position="1197"/>
    </location>
</feature>
<feature type="glycosylation site" description="N-linked (GlcNAc...) asparagine" evidence="2">
    <location>
        <position position="42"/>
    </location>
</feature>
<feature type="glycosylation site" description="N-linked (GlcNAc...) asparagine" evidence="2">
    <location>
        <position position="210"/>
    </location>
</feature>
<feature type="glycosylation site" description="N-linked (GlcNAc...) asparagine" evidence="2">
    <location>
        <position position="610"/>
    </location>
</feature>
<feature type="sequence conflict" description="In Ref. 1; BAC38508." evidence="4" ref="1">
    <original>C</original>
    <variation>G</variation>
    <location>
        <position position="6"/>
    </location>
</feature>
<feature type="sequence conflict" description="In Ref. 1; BAC38508." evidence="4" ref="1">
    <original>DC</original>
    <variation>GW</variation>
    <location>
        <begin position="62"/>
        <end position="63"/>
    </location>
</feature>
<feature type="sequence conflict" description="In Ref. 1; BAC38508." evidence="4" ref="1">
    <original>Y</original>
    <variation>V</variation>
    <location>
        <position position="75"/>
    </location>
</feature>
<feature type="sequence conflict" description="In Ref. 1; BAC38508." evidence="4" ref="1">
    <original>TNV</original>
    <variation>PHG</variation>
    <location>
        <begin position="95"/>
        <end position="97"/>
    </location>
</feature>
<feature type="sequence conflict" description="In Ref. 1; BAC38508." evidence="4" ref="1">
    <original>V</original>
    <variation>G</variation>
    <location>
        <position position="101"/>
    </location>
</feature>
<feature type="sequence conflict" description="In Ref. 1; BAC38508." evidence="4" ref="1">
    <original>T</original>
    <variation>A</variation>
    <location>
        <position position="109"/>
    </location>
</feature>
<feature type="sequence conflict" description="In Ref. 1; BAC38508." evidence="4" ref="1">
    <original>D</original>
    <variation>G</variation>
    <location>
        <position position="113"/>
    </location>
</feature>
<feature type="sequence conflict" description="In Ref. 1; BAC38508." evidence="4" ref="1">
    <original>P</original>
    <variation>T</variation>
    <location>
        <position position="477"/>
    </location>
</feature>
<feature type="sequence conflict" description="In Ref. 2; AAH24503." evidence="4" ref="2">
    <original>KAED</original>
    <variation>GRVG</variation>
    <location>
        <begin position="875"/>
        <end position="878"/>
    </location>
</feature>
<feature type="sequence conflict" description="In Ref. 1; BAC31513." evidence="4" ref="1">
    <original>E</original>
    <variation>G</variation>
    <location>
        <position position="1029"/>
    </location>
</feature>
<feature type="sequence conflict" description="In Ref. 1; BAC31513." evidence="4" ref="1">
    <original>L</original>
    <variation>V</variation>
    <location>
        <position position="1176"/>
    </location>
</feature>
<protein>
    <recommendedName>
        <fullName evidence="4">BOS complex subunit NOMO1</fullName>
    </recommendedName>
    <alternativeName>
        <fullName evidence="7">Nodal modulator 1</fullName>
    </alternativeName>
</protein>
<keyword id="KW-0175">Coiled coil</keyword>
<keyword id="KW-0256">Endoplasmic reticulum</keyword>
<keyword id="KW-0325">Glycoprotein</keyword>
<keyword id="KW-0472">Membrane</keyword>
<keyword id="KW-0597">Phosphoprotein</keyword>
<keyword id="KW-1185">Reference proteome</keyword>
<keyword id="KW-0732">Signal</keyword>
<keyword id="KW-0812">Transmembrane</keyword>
<keyword id="KW-1133">Transmembrane helix</keyword>
<proteinExistence type="evidence at protein level"/>
<gene>
    <name evidence="11" type="primary">Nomo1</name>
</gene>
<accession>Q6GQT9</accession>
<accession>Q3TKZ1</accession>
<accession>Q8BJM1</accession>
<accession>Q8BJM8</accession>
<accession>Q8BLS9</accession>
<accession>Q8K074</accession>
<accession>Q8R1I7</accession>
<name>NOMO1_MOUSE</name>
<sequence length="1214" mass="133420">MRAGRCAAALLLLLLSGAGRAIGSEDIVVGCGGFVKSDVEINYSLIEIKLYTKHGTLKYQTDCAPNNGYFMIPLYDKGDFILKIEPPLGWSFEPTNVELRVDGVSDICTKGGDINFLFTGFSVNGKVLSKGQPLGPAGVQVSLRSTGADSKIQSTVTQPGGKFAFFKVLPGDYEILATHPTWALKEASTTVRVTNSNANAAGPLIVAGYNVSGSVRSDGEPMKGVKFLLFSSLVNKEDVLGCNVSPVSGFQPPDESLVYLCYAVSKEDGSFSFYSLPSGGYTVVPFYRGERITFDVAPSRLDFTVEHDSLRIEPVFHVMGFSVTGRVLNGPDGEGVPEAVVTLNNQIKVKTKADGSFRLENITTGTYTIHAQKEHLYFEMVTIKIAPNTPQLADLIATGFSICGQIAIVRSPDTIKQMSKYRVVLSSQDKDKALLTVDSDAHGSFCFKAKPGAYKVQVVVPEAETRAGLMLKPQVFPLTVTNRPVMDVAFVQFLASVSGKVSCLDTCGDLLVTLQSLSRQGEKRSLQLSGKVNSMTFTFDKVLPGRYKISIMHEDWCWRNKSLEVEVLEDDVSAVEFRQTGYMLRCALSHAITLEFHQDGNGPENVGIYNLSRGVNRFCLSKPGVYKVTPRSCHRFEQAFYTYDTSSPSILTLTAIRHHVLGTIITDKMMDVTVTIKSSIDSEPALVLGPLKSAQELRREQQLAEIETRRQEREKNGKEEGEEGRARPPGQEMVDELQGPFSYDFSYWARSGEKITVTPSSKELLFYPPSMEATVSGESCPGKLIEIHGKAGLFLEGQIHPELEGVEIVISEKGASSPLITVFTDDKGAYSVGPLHSDLEYTVNSQKEGYVLTAVEGTVGDFKAYALAGVSFEIKAEDDQPLPGVLLSLSGGVFRSNLLTQDNGILTFSNLSPGQYYFKPMMKEFRFEPSSQMIEVQEGQNLRITITGFRTAYSCYGTVSSLNGEPEQGVAVEAVGQKDCSIYGEDTVTDEEGKFRLRGLLPGCMYHVQLKAEGNDHIERALPHHRVIEVGNNDVDDVNIIVFRQINQFDLSGNVITSSEYLSTLWVKLYKSESLDNPIQTVSLGQSLFFHFPPLLRDGENYVVLLDTTLPRSQYDYVLPQVSFTAVGYHKHITLVFSPTRKLPEQDIAQGSYIALPLTLLLLLAGYNHDKLIPLLLQLTSRLQGVRALGQAASDSSGPEDMKRQTKKQKTRRT</sequence>